<gene>
    <name evidence="1" type="primary">thrS</name>
    <name type="ordered locus">MYPU_7460</name>
</gene>
<accession>Q98PH6</accession>
<proteinExistence type="inferred from homology"/>
<feature type="chain" id="PRO_0000101011" description="Threonine--tRNA ligase">
    <location>
        <begin position="1"/>
        <end position="589"/>
    </location>
</feature>
<feature type="region of interest" description="Catalytic" evidence="1">
    <location>
        <begin position="191"/>
        <end position="487"/>
    </location>
</feature>
<feature type="binding site" evidence="1">
    <location>
        <position position="284"/>
    </location>
    <ligand>
        <name>Zn(2+)</name>
        <dbReference type="ChEBI" id="CHEBI:29105"/>
    </ligand>
</feature>
<feature type="binding site" evidence="1">
    <location>
        <position position="335"/>
    </location>
    <ligand>
        <name>Zn(2+)</name>
        <dbReference type="ChEBI" id="CHEBI:29105"/>
    </ligand>
</feature>
<feature type="binding site" evidence="1">
    <location>
        <position position="464"/>
    </location>
    <ligand>
        <name>Zn(2+)</name>
        <dbReference type="ChEBI" id="CHEBI:29105"/>
    </ligand>
</feature>
<organism>
    <name type="scientific">Mycoplasmopsis pulmonis (strain UAB CTIP)</name>
    <name type="common">Mycoplasma pulmonis</name>
    <dbReference type="NCBI Taxonomy" id="272635"/>
    <lineage>
        <taxon>Bacteria</taxon>
        <taxon>Bacillati</taxon>
        <taxon>Mycoplasmatota</taxon>
        <taxon>Mycoplasmoidales</taxon>
        <taxon>Metamycoplasmataceae</taxon>
        <taxon>Mycoplasmopsis</taxon>
    </lineage>
</organism>
<reference key="1">
    <citation type="journal article" date="2001" name="Nucleic Acids Res.">
        <title>The complete genome sequence of the murine respiratory pathogen Mycoplasma pulmonis.</title>
        <authorList>
            <person name="Chambaud I."/>
            <person name="Heilig R."/>
            <person name="Ferris S."/>
            <person name="Barbe V."/>
            <person name="Samson D."/>
            <person name="Galisson F."/>
            <person name="Moszer I."/>
            <person name="Dybvig K."/>
            <person name="Wroblewski H."/>
            <person name="Viari A."/>
            <person name="Rocha E.P.C."/>
            <person name="Blanchard A."/>
        </authorList>
    </citation>
    <scope>NUCLEOTIDE SEQUENCE [LARGE SCALE GENOMIC DNA]</scope>
    <source>
        <strain>UAB CTIP</strain>
    </source>
</reference>
<dbReference type="EC" id="6.1.1.3" evidence="1"/>
<dbReference type="EMBL" id="AL445565">
    <property type="protein sequence ID" value="CAC13919.1"/>
    <property type="molecule type" value="Genomic_DNA"/>
</dbReference>
<dbReference type="PIR" id="B90605">
    <property type="entry name" value="B90605"/>
</dbReference>
<dbReference type="RefSeq" id="WP_010925547.1">
    <property type="nucleotide sequence ID" value="NC_002771.1"/>
</dbReference>
<dbReference type="SMR" id="Q98PH6"/>
<dbReference type="STRING" id="272635.gene:17577357"/>
<dbReference type="KEGG" id="mpu:MYPU_7460"/>
<dbReference type="eggNOG" id="COG0441">
    <property type="taxonomic scope" value="Bacteria"/>
</dbReference>
<dbReference type="HOGENOM" id="CLU_008554_3_2_14"/>
<dbReference type="BioCyc" id="MPUL272635:G1GT6-757-MONOMER"/>
<dbReference type="Proteomes" id="UP000000528">
    <property type="component" value="Chromosome"/>
</dbReference>
<dbReference type="GO" id="GO:0005737">
    <property type="term" value="C:cytoplasm"/>
    <property type="evidence" value="ECO:0007669"/>
    <property type="project" value="UniProtKB-SubCell"/>
</dbReference>
<dbReference type="GO" id="GO:0005524">
    <property type="term" value="F:ATP binding"/>
    <property type="evidence" value="ECO:0007669"/>
    <property type="project" value="UniProtKB-UniRule"/>
</dbReference>
<dbReference type="GO" id="GO:0046872">
    <property type="term" value="F:metal ion binding"/>
    <property type="evidence" value="ECO:0007669"/>
    <property type="project" value="UniProtKB-KW"/>
</dbReference>
<dbReference type="GO" id="GO:0004829">
    <property type="term" value="F:threonine-tRNA ligase activity"/>
    <property type="evidence" value="ECO:0007669"/>
    <property type="project" value="UniProtKB-UniRule"/>
</dbReference>
<dbReference type="GO" id="GO:0000049">
    <property type="term" value="F:tRNA binding"/>
    <property type="evidence" value="ECO:0007669"/>
    <property type="project" value="UniProtKB-KW"/>
</dbReference>
<dbReference type="GO" id="GO:0006435">
    <property type="term" value="P:threonyl-tRNA aminoacylation"/>
    <property type="evidence" value="ECO:0007669"/>
    <property type="project" value="UniProtKB-UniRule"/>
</dbReference>
<dbReference type="CDD" id="cd00860">
    <property type="entry name" value="ThrRS_anticodon"/>
    <property type="match status" value="1"/>
</dbReference>
<dbReference type="CDD" id="cd00771">
    <property type="entry name" value="ThrRS_core"/>
    <property type="match status" value="1"/>
</dbReference>
<dbReference type="FunFam" id="3.30.930.10:FF:000002">
    <property type="entry name" value="Threonine--tRNA ligase"/>
    <property type="match status" value="1"/>
</dbReference>
<dbReference type="FunFam" id="3.40.50.800:FF:000001">
    <property type="entry name" value="Threonine--tRNA ligase"/>
    <property type="match status" value="1"/>
</dbReference>
<dbReference type="Gene3D" id="3.30.54.20">
    <property type="match status" value="1"/>
</dbReference>
<dbReference type="Gene3D" id="3.40.50.800">
    <property type="entry name" value="Anticodon-binding domain"/>
    <property type="match status" value="1"/>
</dbReference>
<dbReference type="Gene3D" id="3.30.930.10">
    <property type="entry name" value="Bira Bifunctional Protein, Domain 2"/>
    <property type="match status" value="1"/>
</dbReference>
<dbReference type="Gene3D" id="3.30.980.10">
    <property type="entry name" value="Threonyl-trna Synthetase, Chain A, domain 2"/>
    <property type="match status" value="1"/>
</dbReference>
<dbReference type="HAMAP" id="MF_00184">
    <property type="entry name" value="Thr_tRNA_synth"/>
    <property type="match status" value="1"/>
</dbReference>
<dbReference type="InterPro" id="IPR002314">
    <property type="entry name" value="aa-tRNA-synt_IIb"/>
</dbReference>
<dbReference type="InterPro" id="IPR006195">
    <property type="entry name" value="aa-tRNA-synth_II"/>
</dbReference>
<dbReference type="InterPro" id="IPR045864">
    <property type="entry name" value="aa-tRNA-synth_II/BPL/LPL"/>
</dbReference>
<dbReference type="InterPro" id="IPR004154">
    <property type="entry name" value="Anticodon-bd"/>
</dbReference>
<dbReference type="InterPro" id="IPR036621">
    <property type="entry name" value="Anticodon-bd_dom_sf"/>
</dbReference>
<dbReference type="InterPro" id="IPR002320">
    <property type="entry name" value="Thr-tRNA-ligase_IIa"/>
</dbReference>
<dbReference type="InterPro" id="IPR018163">
    <property type="entry name" value="Thr/Ala-tRNA-synth_IIc_edit"/>
</dbReference>
<dbReference type="InterPro" id="IPR047246">
    <property type="entry name" value="ThrRS_anticodon"/>
</dbReference>
<dbReference type="InterPro" id="IPR033728">
    <property type="entry name" value="ThrRS_core"/>
</dbReference>
<dbReference type="InterPro" id="IPR012947">
    <property type="entry name" value="tRNA_SAD"/>
</dbReference>
<dbReference type="NCBIfam" id="TIGR00418">
    <property type="entry name" value="thrS"/>
    <property type="match status" value="1"/>
</dbReference>
<dbReference type="PANTHER" id="PTHR11451:SF56">
    <property type="entry name" value="THREONINE--TRNA LIGASE 1"/>
    <property type="match status" value="1"/>
</dbReference>
<dbReference type="PANTHER" id="PTHR11451">
    <property type="entry name" value="THREONINE-TRNA LIGASE"/>
    <property type="match status" value="1"/>
</dbReference>
<dbReference type="Pfam" id="PF03129">
    <property type="entry name" value="HGTP_anticodon"/>
    <property type="match status" value="1"/>
</dbReference>
<dbReference type="Pfam" id="PF00587">
    <property type="entry name" value="tRNA-synt_2b"/>
    <property type="match status" value="1"/>
</dbReference>
<dbReference type="Pfam" id="PF07973">
    <property type="entry name" value="tRNA_SAD"/>
    <property type="match status" value="1"/>
</dbReference>
<dbReference type="PRINTS" id="PR01047">
    <property type="entry name" value="TRNASYNTHTHR"/>
</dbReference>
<dbReference type="SMART" id="SM00863">
    <property type="entry name" value="tRNA_SAD"/>
    <property type="match status" value="1"/>
</dbReference>
<dbReference type="SUPFAM" id="SSF52954">
    <property type="entry name" value="Class II aaRS ABD-related"/>
    <property type="match status" value="1"/>
</dbReference>
<dbReference type="SUPFAM" id="SSF55681">
    <property type="entry name" value="Class II aaRS and biotin synthetases"/>
    <property type="match status" value="1"/>
</dbReference>
<dbReference type="SUPFAM" id="SSF55186">
    <property type="entry name" value="ThrRS/AlaRS common domain"/>
    <property type="match status" value="1"/>
</dbReference>
<dbReference type="PROSITE" id="PS50862">
    <property type="entry name" value="AA_TRNA_LIGASE_II"/>
    <property type="match status" value="1"/>
</dbReference>
<sequence>MNEKNSDEINYDFKVDSNLNHTTSHLLAAAIVQLYPNVKLGFGPAIEEGFYYDFEFENPLSKLELLKIEKLMKKLASMNLKMVKVDGSNYDFTNKPYKKELYDELKQKGQEITFYSLVDTNGKEIFTDLCAGGHVESTSKINNFKLLSLAGAYWRGNSNNIQLTRIYGSSFYKKDELENYLKVIEDRKERDHRKIGKNLGIFTFSSLSGLGFPIWLKKGMLIKRAIEKEILYLDRKYGFEEVLSPHFGEESLYIKSGHLAHYQETMFKSLEVENEKLIPRPMTCPHHIIIYDAFPRSYRELPLRLSEQSRLYRYEKSGALTGLERVRTMDLTEGHIFIRQDQIKDEVLNMINLIQETLKIFKIKIDHVALSLRDNDKEKFFDDDQMWDQAESALKEILDQNKIDYIVEKGEAAFYGPKIDFQVKTVLNNIITMSTIQLDFLLPRKFNISYIAPDGSKQTPLMIHRGLIGTYERFVSILLEQTKGNFPFWLSPSQVIVLPIAKEFKEYAFEIYSKIFKQNFNVEIDNRDETINKKIREAQINKYKYQIIIGKQEMENKTIAIREYGKVQTITMDLESFIEKIKSQRDSKE</sequence>
<protein>
    <recommendedName>
        <fullName evidence="1">Threonine--tRNA ligase</fullName>
        <ecNumber evidence="1">6.1.1.3</ecNumber>
    </recommendedName>
    <alternativeName>
        <fullName evidence="1">Threonyl-tRNA synthetase</fullName>
        <shortName evidence="1">ThrRS</shortName>
    </alternativeName>
</protein>
<keyword id="KW-0030">Aminoacyl-tRNA synthetase</keyword>
<keyword id="KW-0067">ATP-binding</keyword>
<keyword id="KW-0963">Cytoplasm</keyword>
<keyword id="KW-0436">Ligase</keyword>
<keyword id="KW-0479">Metal-binding</keyword>
<keyword id="KW-0547">Nucleotide-binding</keyword>
<keyword id="KW-0648">Protein biosynthesis</keyword>
<keyword id="KW-1185">Reference proteome</keyword>
<keyword id="KW-0694">RNA-binding</keyword>
<keyword id="KW-0820">tRNA-binding</keyword>
<keyword id="KW-0862">Zinc</keyword>
<name>SYT_MYCPU</name>
<evidence type="ECO:0000255" key="1">
    <source>
        <dbReference type="HAMAP-Rule" id="MF_00184"/>
    </source>
</evidence>
<comment type="function">
    <text evidence="1">Catalyzes the attachment of threonine to tRNA(Thr) in a two-step reaction: L-threonine is first activated by ATP to form Thr-AMP and then transferred to the acceptor end of tRNA(Thr). Also edits incorrectly charged L-seryl-tRNA(Thr).</text>
</comment>
<comment type="catalytic activity">
    <reaction evidence="1">
        <text>tRNA(Thr) + L-threonine + ATP = L-threonyl-tRNA(Thr) + AMP + diphosphate + H(+)</text>
        <dbReference type="Rhea" id="RHEA:24624"/>
        <dbReference type="Rhea" id="RHEA-COMP:9670"/>
        <dbReference type="Rhea" id="RHEA-COMP:9704"/>
        <dbReference type="ChEBI" id="CHEBI:15378"/>
        <dbReference type="ChEBI" id="CHEBI:30616"/>
        <dbReference type="ChEBI" id="CHEBI:33019"/>
        <dbReference type="ChEBI" id="CHEBI:57926"/>
        <dbReference type="ChEBI" id="CHEBI:78442"/>
        <dbReference type="ChEBI" id="CHEBI:78534"/>
        <dbReference type="ChEBI" id="CHEBI:456215"/>
        <dbReference type="EC" id="6.1.1.3"/>
    </reaction>
</comment>
<comment type="cofactor">
    <cofactor evidence="1">
        <name>Zn(2+)</name>
        <dbReference type="ChEBI" id="CHEBI:29105"/>
    </cofactor>
    <text evidence="1">Binds 1 zinc ion per subunit.</text>
</comment>
<comment type="subunit">
    <text evidence="1">Homodimer.</text>
</comment>
<comment type="subcellular location">
    <subcellularLocation>
        <location evidence="1">Cytoplasm</location>
    </subcellularLocation>
</comment>
<comment type="similarity">
    <text evidence="1">Belongs to the class-II aminoacyl-tRNA synthetase family.</text>
</comment>